<proteinExistence type="evidence at transcript level"/>
<reference key="1">
    <citation type="journal article" date="1997" name="Mol. Gen. Genet.">
        <title>Genetics of sorbitol metabolism in Erwinia amylovora and its influence on bacterial virulence.</title>
        <authorList>
            <person name="Aldridge P."/>
            <person name="Metzger M."/>
            <person name="Geider K."/>
        </authorList>
    </citation>
    <scope>NUCLEOTIDE SEQUENCE [GENOMIC DNA]</scope>
    <scope>FUNCTION</scope>
    <scope>INDUCTION</scope>
    <source>
        <strain>EA7/74</strain>
    </source>
</reference>
<organism>
    <name type="scientific">Erwinia amylovora</name>
    <name type="common">Fire blight bacteria</name>
    <dbReference type="NCBI Taxonomy" id="552"/>
    <lineage>
        <taxon>Bacteria</taxon>
        <taxon>Pseudomonadati</taxon>
        <taxon>Pseudomonadota</taxon>
        <taxon>Gammaproteobacteria</taxon>
        <taxon>Enterobacterales</taxon>
        <taxon>Erwiniaceae</taxon>
        <taxon>Erwinia</taxon>
    </lineage>
</organism>
<protein>
    <recommendedName>
        <fullName evidence="1">PTS system glucitol/sorbitol-specific EIIC component</fullName>
    </recommendedName>
    <alternativeName>
        <fullName evidence="1">EIIC-Gut</fullName>
    </alternativeName>
    <alternativeName>
        <fullName evidence="1">Glucitol/sorbitol permease IIC component</fullName>
    </alternativeName>
</protein>
<keyword id="KW-0997">Cell inner membrane</keyword>
<keyword id="KW-1003">Cell membrane</keyword>
<keyword id="KW-0472">Membrane</keyword>
<keyword id="KW-0598">Phosphotransferase system</keyword>
<keyword id="KW-0762">Sugar transport</keyword>
<keyword id="KW-0812">Transmembrane</keyword>
<keyword id="KW-1133">Transmembrane helix</keyword>
<keyword id="KW-0813">Transport</keyword>
<comment type="function">
    <text evidence="4">The phosphoenolpyruvate-dependent sugar phosphotransferase system (PTS), a major carbohydrate active transport system, catalyzes the phosphorylation of incoming sugar substrates concomitant with their translocation across the cell membrane. The enzyme II complex composed of SrlA, SrlB and SrlE is involved in glucitol/sorbitol transport.</text>
</comment>
<comment type="subcellular location">
    <subcellularLocation>
        <location evidence="2">Cell inner membrane</location>
        <topology evidence="2">Multi-pass membrane protein</topology>
    </subcellularLocation>
</comment>
<comment type="induction">
    <text evidence="3">Activated by sorbitol and repressed by glucose.</text>
</comment>
<comment type="domain">
    <text evidence="2">The EIIC domain forms the PTS system translocation channel and contains the specific substrate-binding site.</text>
</comment>
<evidence type="ECO:0000250" key="1">
    <source>
        <dbReference type="UniProtKB" id="P56579"/>
    </source>
</evidence>
<evidence type="ECO:0000255" key="2">
    <source>
        <dbReference type="PROSITE-ProRule" id="PRU00430"/>
    </source>
</evidence>
<evidence type="ECO:0000269" key="3">
    <source>
    </source>
</evidence>
<evidence type="ECO:0000305" key="4">
    <source>
    </source>
</evidence>
<name>PTHC_ERWAM</name>
<dbReference type="EMBL" id="Y14603">
    <property type="protein sequence ID" value="CAA74941.1"/>
    <property type="molecule type" value="Genomic_DNA"/>
</dbReference>
<dbReference type="RefSeq" id="WP_004159991.1">
    <property type="nucleotide sequence ID" value="NZ_RQKG01000018.1"/>
</dbReference>
<dbReference type="OMA" id="HINPGEY"/>
<dbReference type="GO" id="GO:0005886">
    <property type="term" value="C:plasma membrane"/>
    <property type="evidence" value="ECO:0007669"/>
    <property type="project" value="UniProtKB-SubCell"/>
</dbReference>
<dbReference type="GO" id="GO:0009401">
    <property type="term" value="P:phosphoenolpyruvate-dependent sugar phosphotransferase system"/>
    <property type="evidence" value="ECO:0007669"/>
    <property type="project" value="UniProtKB-KW"/>
</dbReference>
<dbReference type="InterPro" id="IPR004699">
    <property type="entry name" value="PTS_IID_sorb"/>
</dbReference>
<dbReference type="NCBIfam" id="TIGR00821">
    <property type="entry name" value="EII-GUT"/>
    <property type="match status" value="1"/>
</dbReference>
<dbReference type="PANTHER" id="PTHR40399">
    <property type="entry name" value="PTS SYSTEM GLUCITOL/SORBITOL-SPECIFIC EIIC COMPONENT"/>
    <property type="match status" value="1"/>
</dbReference>
<dbReference type="PANTHER" id="PTHR40399:SF1">
    <property type="entry name" value="PTS SYSTEM GLUCITOL_SORBITOL-SPECIFIC EIIC COMPONENT"/>
    <property type="match status" value="1"/>
</dbReference>
<dbReference type="Pfam" id="PF03608">
    <property type="entry name" value="EII-GUT"/>
    <property type="match status" value="1"/>
</dbReference>
<dbReference type="PIRSF" id="PIRSF038321">
    <property type="entry name" value="PTS_glc_srb_IIC"/>
    <property type="match status" value="1"/>
</dbReference>
<dbReference type="PROSITE" id="PS51107">
    <property type="entry name" value="PTS_EIIC_TYPE_5"/>
    <property type="match status" value="1"/>
</dbReference>
<accession>O32521</accession>
<feature type="chain" id="PRO_0000186566" description="PTS system glucitol/sorbitol-specific EIIC component">
    <location>
        <begin position="1"/>
        <end position="182"/>
    </location>
</feature>
<feature type="transmembrane region" description="Helical" evidence="2">
    <location>
        <begin position="29"/>
        <end position="49"/>
    </location>
</feature>
<feature type="transmembrane region" description="Helical" evidence="2">
    <location>
        <begin position="68"/>
        <end position="88"/>
    </location>
</feature>
<feature type="transmembrane region" description="Helical" evidence="2">
    <location>
        <begin position="132"/>
        <end position="152"/>
    </location>
</feature>
<feature type="domain" description="PTS EIIC type-5" evidence="2">
    <location>
        <begin position="1"/>
        <end position="182"/>
    </location>
</feature>
<gene>
    <name type="primary">srlA</name>
</gene>
<sequence length="182" mass="20000">MIEAITHGAEWFIGLFQKGGEVFVGMVTGILPLLISLLVIMNALIVFVGQRRIEKLAQKCAGNPVTRYLVLPFIGTFVFCNPMTHSLGKFLPEKYKPSYYAAASYSCHSMNGLFPHINPGELFVYLGIANGLTTLGVPLGPLAVSYLLVGLITNFFRGWVTDLTTSVFEKKMGIKLDKSVHL</sequence>